<keyword id="KW-0131">Cell cycle</keyword>
<keyword id="KW-0132">Cell division</keyword>
<name>MINE_CUPPJ</name>
<sequence>MSILSFLLGEKKKSASVAKERLQIILAHERTGHSAPADYLPALQRELVAVISKYVKISDQDLRVSLERQDNLEVLEVKIEIPQN</sequence>
<gene>
    <name evidence="1" type="primary">minE</name>
    <name type="ordered locus">Reut_A0062</name>
</gene>
<comment type="function">
    <text evidence="1">Prevents the cell division inhibition by proteins MinC and MinD at internal division sites while permitting inhibition at polar sites. This ensures cell division at the proper site by restricting the formation of a division septum at the midpoint of the long axis of the cell.</text>
</comment>
<comment type="similarity">
    <text evidence="1">Belongs to the MinE family.</text>
</comment>
<reference key="1">
    <citation type="journal article" date="2010" name="PLoS ONE">
        <title>The complete multipartite genome sequence of Cupriavidus necator JMP134, a versatile pollutant degrader.</title>
        <authorList>
            <person name="Lykidis A."/>
            <person name="Perez-Pantoja D."/>
            <person name="Ledger T."/>
            <person name="Mavromatis K."/>
            <person name="Anderson I.J."/>
            <person name="Ivanova N.N."/>
            <person name="Hooper S.D."/>
            <person name="Lapidus A."/>
            <person name="Lucas S."/>
            <person name="Gonzalez B."/>
            <person name="Kyrpides N.C."/>
        </authorList>
    </citation>
    <scope>NUCLEOTIDE SEQUENCE [LARGE SCALE GENOMIC DNA]</scope>
    <source>
        <strain>JMP134 / LMG 1197</strain>
    </source>
</reference>
<dbReference type="EMBL" id="CP000090">
    <property type="protein sequence ID" value="AAZ59444.1"/>
    <property type="molecule type" value="Genomic_DNA"/>
</dbReference>
<dbReference type="SMR" id="Q477I9"/>
<dbReference type="STRING" id="264198.Reut_A0062"/>
<dbReference type="KEGG" id="reu:Reut_A0062"/>
<dbReference type="eggNOG" id="COG0851">
    <property type="taxonomic scope" value="Bacteria"/>
</dbReference>
<dbReference type="HOGENOM" id="CLU_137929_2_1_4"/>
<dbReference type="OrthoDB" id="9802655at2"/>
<dbReference type="GO" id="GO:0051301">
    <property type="term" value="P:cell division"/>
    <property type="evidence" value="ECO:0007669"/>
    <property type="project" value="UniProtKB-KW"/>
</dbReference>
<dbReference type="GO" id="GO:0032955">
    <property type="term" value="P:regulation of division septum assembly"/>
    <property type="evidence" value="ECO:0007669"/>
    <property type="project" value="InterPro"/>
</dbReference>
<dbReference type="FunFam" id="3.30.1070.10:FF:000001">
    <property type="entry name" value="Cell division topological specificity factor"/>
    <property type="match status" value="1"/>
</dbReference>
<dbReference type="Gene3D" id="3.30.1070.10">
    <property type="entry name" value="Cell division topological specificity factor MinE"/>
    <property type="match status" value="1"/>
</dbReference>
<dbReference type="HAMAP" id="MF_00262">
    <property type="entry name" value="MinE"/>
    <property type="match status" value="1"/>
</dbReference>
<dbReference type="InterPro" id="IPR005527">
    <property type="entry name" value="MinE"/>
</dbReference>
<dbReference type="InterPro" id="IPR036707">
    <property type="entry name" value="MinE_sf"/>
</dbReference>
<dbReference type="NCBIfam" id="TIGR01215">
    <property type="entry name" value="minE"/>
    <property type="match status" value="1"/>
</dbReference>
<dbReference type="NCBIfam" id="NF001422">
    <property type="entry name" value="PRK00296.1"/>
    <property type="match status" value="1"/>
</dbReference>
<dbReference type="NCBIfam" id="NF010595">
    <property type="entry name" value="PRK13989.1"/>
    <property type="match status" value="1"/>
</dbReference>
<dbReference type="Pfam" id="PF03776">
    <property type="entry name" value="MinE"/>
    <property type="match status" value="1"/>
</dbReference>
<dbReference type="SUPFAM" id="SSF55229">
    <property type="entry name" value="Cell division protein MinE topological specificity domain"/>
    <property type="match status" value="1"/>
</dbReference>
<accession>Q477I9</accession>
<organism>
    <name type="scientific">Cupriavidus pinatubonensis (strain JMP 134 / LMG 1197)</name>
    <name type="common">Cupriavidus necator (strain JMP 134)</name>
    <dbReference type="NCBI Taxonomy" id="264198"/>
    <lineage>
        <taxon>Bacteria</taxon>
        <taxon>Pseudomonadati</taxon>
        <taxon>Pseudomonadota</taxon>
        <taxon>Betaproteobacteria</taxon>
        <taxon>Burkholderiales</taxon>
        <taxon>Burkholderiaceae</taxon>
        <taxon>Cupriavidus</taxon>
    </lineage>
</organism>
<evidence type="ECO:0000255" key="1">
    <source>
        <dbReference type="HAMAP-Rule" id="MF_00262"/>
    </source>
</evidence>
<protein>
    <recommendedName>
        <fullName evidence="1">Cell division topological specificity factor</fullName>
    </recommendedName>
</protein>
<feature type="chain" id="PRO_0000298170" description="Cell division topological specificity factor">
    <location>
        <begin position="1"/>
        <end position="84"/>
    </location>
</feature>
<proteinExistence type="inferred from homology"/>